<protein>
    <recommendedName>
        <fullName evidence="1">NADH-quinone oxidoreductase subunit C</fullName>
        <ecNumber evidence="1">7.1.1.-</ecNumber>
    </recommendedName>
    <alternativeName>
        <fullName evidence="1">NADH dehydrogenase I subunit C</fullName>
    </alternativeName>
    <alternativeName>
        <fullName evidence="1">NDH-1 subunit C</fullName>
    </alternativeName>
</protein>
<evidence type="ECO:0000255" key="1">
    <source>
        <dbReference type="HAMAP-Rule" id="MF_01357"/>
    </source>
</evidence>
<evidence type="ECO:0000256" key="2">
    <source>
        <dbReference type="SAM" id="MobiDB-lite"/>
    </source>
</evidence>
<name>NUOC_SALAI</name>
<feature type="chain" id="PRO_0000358196" description="NADH-quinone oxidoreductase subunit C">
    <location>
        <begin position="1"/>
        <end position="245"/>
    </location>
</feature>
<feature type="region of interest" description="Disordered" evidence="2">
    <location>
        <begin position="1"/>
        <end position="54"/>
    </location>
</feature>
<feature type="region of interest" description="Disordered" evidence="2">
    <location>
        <begin position="217"/>
        <end position="245"/>
    </location>
</feature>
<feature type="compositionally biased region" description="Basic and acidic residues" evidence="2">
    <location>
        <begin position="1"/>
        <end position="10"/>
    </location>
</feature>
<feature type="compositionally biased region" description="Low complexity" evidence="2">
    <location>
        <begin position="11"/>
        <end position="28"/>
    </location>
</feature>
<feature type="compositionally biased region" description="Gly residues" evidence="2">
    <location>
        <begin position="39"/>
        <end position="54"/>
    </location>
</feature>
<keyword id="KW-1003">Cell membrane</keyword>
<keyword id="KW-0472">Membrane</keyword>
<keyword id="KW-0520">NAD</keyword>
<keyword id="KW-0874">Quinone</keyword>
<keyword id="KW-1278">Translocase</keyword>
<keyword id="KW-0813">Transport</keyword>
<reference key="1">
    <citation type="submission" date="2007-10" db="EMBL/GenBank/DDBJ databases">
        <title>Complete sequence of Salinispora arenicola CNS-205.</title>
        <authorList>
            <consortium name="US DOE Joint Genome Institute"/>
            <person name="Copeland A."/>
            <person name="Lucas S."/>
            <person name="Lapidus A."/>
            <person name="Barry K."/>
            <person name="Glavina del Rio T."/>
            <person name="Dalin E."/>
            <person name="Tice H."/>
            <person name="Pitluck S."/>
            <person name="Foster B."/>
            <person name="Schmutz J."/>
            <person name="Larimer F."/>
            <person name="Land M."/>
            <person name="Hauser L."/>
            <person name="Kyrpides N."/>
            <person name="Ivanova N."/>
            <person name="Jensen P.R."/>
            <person name="Moore B.S."/>
            <person name="Penn K."/>
            <person name="Jenkins C."/>
            <person name="Udwary D."/>
            <person name="Xiang L."/>
            <person name="Gontang E."/>
            <person name="Richardson P."/>
        </authorList>
    </citation>
    <scope>NUCLEOTIDE SEQUENCE [LARGE SCALE GENOMIC DNA]</scope>
    <source>
        <strain>CNS-205</strain>
    </source>
</reference>
<proteinExistence type="inferred from homology"/>
<sequence length="245" mass="26713">MNAPQDRTDDGGVPVPVTPAGATGGAPAELPPSSPAGRGMFGDQGTGDVSGYGGLVRPQRSIEAASRPYGGYFDEVADALEEAYPAFGEAIEKVVVDRGELTLHIRPERIAEVCQVLRDDLALRFELCSSVSGVDYLGADARRLHAVYQLTSMTYRRQIRLEAAVSVEDPHLPSVTGVYPTADWQEREAYDMFGIVFDGHPGLTRILMPDDWEGHPQRKDYPLGGVPVEYKGAEIPPPDRRRSYQ</sequence>
<gene>
    <name evidence="1" type="primary">nuoC</name>
    <name type="ordered locus">Sare_4461</name>
</gene>
<comment type="function">
    <text evidence="1">NDH-1 shuttles electrons from NADH, via FMN and iron-sulfur (Fe-S) centers, to quinones in the respiratory chain. The immediate electron acceptor for the enzyme in this species is believed to be a menaquinone. Couples the redox reaction to proton translocation (for every two electrons transferred, four hydrogen ions are translocated across the cytoplasmic membrane), and thus conserves the redox energy in a proton gradient.</text>
</comment>
<comment type="catalytic activity">
    <reaction evidence="1">
        <text>a quinone + NADH + 5 H(+)(in) = a quinol + NAD(+) + 4 H(+)(out)</text>
        <dbReference type="Rhea" id="RHEA:57888"/>
        <dbReference type="ChEBI" id="CHEBI:15378"/>
        <dbReference type="ChEBI" id="CHEBI:24646"/>
        <dbReference type="ChEBI" id="CHEBI:57540"/>
        <dbReference type="ChEBI" id="CHEBI:57945"/>
        <dbReference type="ChEBI" id="CHEBI:132124"/>
    </reaction>
</comment>
<comment type="subunit">
    <text evidence="1">NDH-1 is composed of 14 different subunits. Subunits NuoB, C, D, E, F, and G constitute the peripheral sector of the complex.</text>
</comment>
<comment type="subcellular location">
    <subcellularLocation>
        <location evidence="1">Cell membrane</location>
        <topology evidence="1">Peripheral membrane protein</topology>
        <orientation evidence="1">Cytoplasmic side</orientation>
    </subcellularLocation>
</comment>
<comment type="similarity">
    <text evidence="1">Belongs to the complex I 30 kDa subunit family.</text>
</comment>
<accession>A8M620</accession>
<organism>
    <name type="scientific">Salinispora arenicola (strain CNS-205)</name>
    <dbReference type="NCBI Taxonomy" id="391037"/>
    <lineage>
        <taxon>Bacteria</taxon>
        <taxon>Bacillati</taxon>
        <taxon>Actinomycetota</taxon>
        <taxon>Actinomycetes</taxon>
        <taxon>Micromonosporales</taxon>
        <taxon>Micromonosporaceae</taxon>
        <taxon>Salinispora</taxon>
    </lineage>
</organism>
<dbReference type="EC" id="7.1.1.-" evidence="1"/>
<dbReference type="EMBL" id="CP000850">
    <property type="protein sequence ID" value="ABW00236.1"/>
    <property type="molecule type" value="Genomic_DNA"/>
</dbReference>
<dbReference type="SMR" id="A8M620"/>
<dbReference type="STRING" id="391037.Sare_4461"/>
<dbReference type="KEGG" id="saq:Sare_4461"/>
<dbReference type="PATRIC" id="fig|391037.6.peg.4505"/>
<dbReference type="eggNOG" id="COG0852">
    <property type="taxonomic scope" value="Bacteria"/>
</dbReference>
<dbReference type="HOGENOM" id="CLU_042628_4_0_11"/>
<dbReference type="OrthoDB" id="9803286at2"/>
<dbReference type="GO" id="GO:0005886">
    <property type="term" value="C:plasma membrane"/>
    <property type="evidence" value="ECO:0007669"/>
    <property type="project" value="UniProtKB-SubCell"/>
</dbReference>
<dbReference type="GO" id="GO:0008137">
    <property type="term" value="F:NADH dehydrogenase (ubiquinone) activity"/>
    <property type="evidence" value="ECO:0007669"/>
    <property type="project" value="InterPro"/>
</dbReference>
<dbReference type="GO" id="GO:0050136">
    <property type="term" value="F:NADH:ubiquinone reductase (non-electrogenic) activity"/>
    <property type="evidence" value="ECO:0007669"/>
    <property type="project" value="UniProtKB-UniRule"/>
</dbReference>
<dbReference type="GO" id="GO:0048038">
    <property type="term" value="F:quinone binding"/>
    <property type="evidence" value="ECO:0007669"/>
    <property type="project" value="UniProtKB-KW"/>
</dbReference>
<dbReference type="Gene3D" id="3.30.460.80">
    <property type="entry name" value="NADH:ubiquinone oxidoreductase, 30kDa subunit"/>
    <property type="match status" value="1"/>
</dbReference>
<dbReference type="HAMAP" id="MF_01357">
    <property type="entry name" value="NDH1_NuoC"/>
    <property type="match status" value="1"/>
</dbReference>
<dbReference type="InterPro" id="IPR010218">
    <property type="entry name" value="NADH_DH_suC"/>
</dbReference>
<dbReference type="InterPro" id="IPR037232">
    <property type="entry name" value="NADH_quin_OxRdtase_su_C/D-like"/>
</dbReference>
<dbReference type="InterPro" id="IPR001268">
    <property type="entry name" value="NADH_UbQ_OxRdtase_30kDa_su"/>
</dbReference>
<dbReference type="NCBIfam" id="TIGR01961">
    <property type="entry name" value="NuoC_fam"/>
    <property type="match status" value="1"/>
</dbReference>
<dbReference type="NCBIfam" id="NF005856">
    <property type="entry name" value="PRK07785.1"/>
    <property type="match status" value="1"/>
</dbReference>
<dbReference type="PANTHER" id="PTHR10884:SF14">
    <property type="entry name" value="NADH DEHYDROGENASE [UBIQUINONE] IRON-SULFUR PROTEIN 3, MITOCHONDRIAL"/>
    <property type="match status" value="1"/>
</dbReference>
<dbReference type="PANTHER" id="PTHR10884">
    <property type="entry name" value="NADH DEHYDROGENASE UBIQUINONE IRON-SULFUR PROTEIN 3"/>
    <property type="match status" value="1"/>
</dbReference>
<dbReference type="Pfam" id="PF00329">
    <property type="entry name" value="Complex1_30kDa"/>
    <property type="match status" value="1"/>
</dbReference>
<dbReference type="SUPFAM" id="SSF143243">
    <property type="entry name" value="Nqo5-like"/>
    <property type="match status" value="1"/>
</dbReference>